<feature type="signal peptide" evidence="3">
    <location>
        <begin position="1"/>
        <end position="18"/>
    </location>
</feature>
<feature type="chain" id="PRO_5004051517" description="L-ascorbate oxidase" evidence="3">
    <location>
        <begin position="19"/>
        <end position="570"/>
    </location>
</feature>
<feature type="domain" description="Plastocyanin-like 1" evidence="3">
    <location>
        <begin position="33"/>
        <end position="140"/>
    </location>
</feature>
<feature type="domain" description="Plastocyanin-like 2" evidence="3">
    <location>
        <begin position="154"/>
        <end position="317"/>
    </location>
</feature>
<feature type="domain" description="Plastocyanin-like 3" evidence="3">
    <location>
        <begin position="426"/>
        <end position="543"/>
    </location>
</feature>
<feature type="binding site" description="type 2 copper site" evidence="1">
    <location>
        <position position="77"/>
    </location>
    <ligand>
        <name>Cu cation</name>
        <dbReference type="ChEBI" id="CHEBI:23378"/>
        <label>1</label>
    </ligand>
</feature>
<feature type="binding site" description="type 3 copper site" evidence="1">
    <location>
        <position position="79"/>
    </location>
    <ligand>
        <name>Cu cation</name>
        <dbReference type="ChEBI" id="CHEBI:23378"/>
        <label>2</label>
    </ligand>
</feature>
<feature type="binding site" description="type 3 copper site" evidence="1">
    <location>
        <position position="121"/>
    </location>
    <ligand>
        <name>Cu cation</name>
        <dbReference type="ChEBI" id="CHEBI:23378"/>
        <label>2</label>
    </ligand>
</feature>
<feature type="binding site" description="type 3 copper site" evidence="1">
    <location>
        <position position="123"/>
    </location>
    <ligand>
        <name>Cu cation</name>
        <dbReference type="ChEBI" id="CHEBI:23378"/>
        <label>3</label>
    </ligand>
</feature>
<feature type="binding site" description="type 1 copper site" evidence="1">
    <location>
        <position position="463"/>
    </location>
    <ligand>
        <name>Cu cation</name>
        <dbReference type="ChEBI" id="CHEBI:23378"/>
        <label>4</label>
    </ligand>
</feature>
<feature type="binding site" description="type 2 copper site" evidence="1">
    <location>
        <position position="466"/>
    </location>
    <ligand>
        <name>Cu cation</name>
        <dbReference type="ChEBI" id="CHEBI:23378"/>
        <label>1</label>
    </ligand>
</feature>
<feature type="binding site" description="type 3 copper site" evidence="1">
    <location>
        <position position="468"/>
    </location>
    <ligand>
        <name>Cu cation</name>
        <dbReference type="ChEBI" id="CHEBI:23378"/>
        <label>3</label>
    </ligand>
</feature>
<feature type="binding site" description="type 3 copper site" evidence="1">
    <location>
        <position position="525"/>
    </location>
    <ligand>
        <name>Cu cation</name>
        <dbReference type="ChEBI" id="CHEBI:23378"/>
        <label>3</label>
    </ligand>
</feature>
<feature type="binding site" description="type 1 copper site" evidence="1">
    <location>
        <position position="526"/>
    </location>
    <ligand>
        <name>Cu cation</name>
        <dbReference type="ChEBI" id="CHEBI:23378"/>
        <label>4</label>
    </ligand>
</feature>
<feature type="binding site" description="type 3 copper site" evidence="1">
    <location>
        <position position="527"/>
    </location>
    <ligand>
        <name>Cu cation</name>
        <dbReference type="ChEBI" id="CHEBI:23378"/>
        <label>2</label>
    </ligand>
</feature>
<feature type="binding site" description="type 1 copper site" evidence="1">
    <location>
        <position position="531"/>
    </location>
    <ligand>
        <name>Cu cation</name>
        <dbReference type="ChEBI" id="CHEBI:23378"/>
        <label>4</label>
    </ligand>
</feature>
<feature type="binding site" description="type 1 copper site" evidence="1">
    <location>
        <position position="536"/>
    </location>
    <ligand>
        <name>Cu cation</name>
        <dbReference type="ChEBI" id="CHEBI:23378"/>
        <label>4</label>
    </ligand>
</feature>
<feature type="glycosylation site" description="N-linked (GlcNAc...) asparagine" evidence="4">
    <location>
        <position position="109"/>
    </location>
</feature>
<feature type="glycosylation site" description="N-linked (GlcNAc...) asparagine" evidence="4">
    <location>
        <position position="196"/>
    </location>
</feature>
<feature type="glycosylation site" description="N-linked (GlcNAc...) asparagine" evidence="4">
    <location>
        <position position="229"/>
    </location>
</feature>
<feature type="glycosylation site" description="N-linked (GlcNAc...) asparagine" evidence="4">
    <location>
        <position position="343"/>
    </location>
</feature>
<feature type="glycosylation site" description="N-linked (GlcNAc...) asparagine" evidence="4">
    <location>
        <position position="384"/>
    </location>
</feature>
<feature type="glycosylation site" description="N-linked (GlcNAc...) asparagine" evidence="4">
    <location>
        <position position="407"/>
    </location>
</feature>
<feature type="glycosylation site" description="N-linked (GlcNAc...) asparagine" evidence="4">
    <location>
        <position position="434"/>
    </location>
</feature>
<feature type="glycosylation site" description="N-linked (GlcNAc...) asparagine" evidence="4">
    <location>
        <position position="442"/>
    </location>
</feature>
<feature type="glycosylation site" description="N-linked (GlcNAc...) asparagine" evidence="4">
    <location>
        <position position="458"/>
    </location>
</feature>
<feature type="disulfide bond" evidence="1">
    <location>
        <begin position="36"/>
        <end position="219"/>
    </location>
</feature>
<feature type="disulfide bond" evidence="1">
    <location>
        <begin position="98"/>
        <end position="557"/>
    </location>
</feature>
<feature type="disulfide bond" evidence="1">
    <location>
        <begin position="197"/>
        <end position="211"/>
    </location>
</feature>
<comment type="function">
    <text evidence="2 5">Ascorbate oxidase involved in a redox system involving ascorbic acid (AsA) (PubMed:27255930). The oxidation of AsA represses responses to high salinity and oxidative stress conditions such as vegetative growth and seed production reductions (By similarity). Negative regulator of defense responses toward incompatible Turnip mosaic virus (TuMV strain UK1) by preventing jasmonic acid (JA)- dependent accumulation of ascorbic acid (AsA, AS) and dehydroascobic acid (DHA) (PubMed:27255930).</text>
</comment>
<comment type="catalytic activity">
    <reaction evidence="2">
        <text>4 L-ascorbate + O2 = 4 monodehydro-L-ascorbate radical + 2 H2O</text>
        <dbReference type="Rhea" id="RHEA:30243"/>
        <dbReference type="ChEBI" id="CHEBI:15377"/>
        <dbReference type="ChEBI" id="CHEBI:15379"/>
        <dbReference type="ChEBI" id="CHEBI:38290"/>
        <dbReference type="ChEBI" id="CHEBI:59513"/>
        <dbReference type="EC" id="1.10.3.3"/>
    </reaction>
</comment>
<comment type="cofactor">
    <cofactor evidence="1">
        <name>Cu cation</name>
        <dbReference type="ChEBI" id="CHEBI:23378"/>
    </cofactor>
    <text evidence="1">Binds 4 Cu cations per monomer.</text>
</comment>
<comment type="pathway">
    <text evidence="2">Cofactor degradation; L-ascorbate degradation.</text>
</comment>
<comment type="subunit">
    <text evidence="1">Dimer.</text>
</comment>
<comment type="subcellular location">
    <subcellularLocation>
        <location evidence="1">Secreted</location>
    </subcellularLocation>
</comment>
<comment type="induction">
    <text evidence="5">Repressed progressively during incompatible Turnip mosaic virus (TuMV) infection (strain UK1) in resistant cultivars (e.g. cv. Aki-masari) but not in susceptible cultivars (e.g. cv. Yukihime-kabu) (PubMed:27255930). When the plant is infected by a compatible TuMV strain (UK1 m2), the down-regulation is transient and last two days (PubMed:27255930). Induced by jasmonic acid (JA) and hydrogen peroxide H(2)O(2) treatments (PubMed:27255930).</text>
</comment>
<comment type="similarity">
    <text evidence="7">Belongs to the multicopper oxidase family.</text>
</comment>
<keyword id="KW-0186">Copper</keyword>
<keyword id="KW-1015">Disulfide bond</keyword>
<keyword id="KW-0325">Glycoprotein</keyword>
<keyword id="KW-0479">Metal-binding</keyword>
<keyword id="KW-0560">Oxidoreductase</keyword>
<keyword id="KW-0611">Plant defense</keyword>
<keyword id="KW-0677">Repeat</keyword>
<keyword id="KW-0964">Secreted</keyword>
<keyword id="KW-0732">Signal</keyword>
<protein>
    <recommendedName>
        <fullName evidence="6">L-ascorbate oxidase</fullName>
        <shortName evidence="7">AAO</shortName>
        <shortName evidence="6">AO</shortName>
        <shortName evidence="7">ASO</shortName>
        <shortName evidence="6">Ascorbase</shortName>
        <ecNumber evidence="2">1.10.3.3</ecNumber>
    </recommendedName>
</protein>
<name>ASO_BRARP</name>
<accession>M4DUF2</accession>
<reference key="1">
    <citation type="journal article" date="2011" name="Nat. Genet.">
        <title>The genome of the mesopolyploid crop species Brassica rapa.</title>
        <authorList>
            <consortium name="Brassica rapa Genome Sequencing Project Consortium"/>
            <person name="Wang X."/>
            <person name="Wang H."/>
            <person name="Wang J."/>
            <person name="Sun R."/>
            <person name="Wu J."/>
            <person name="Liu S."/>
            <person name="Bai Y."/>
            <person name="Mun J.H."/>
            <person name="Bancroft I."/>
            <person name="Cheng F."/>
            <person name="Huang S."/>
            <person name="Li X."/>
            <person name="Hua W."/>
            <person name="Wang J."/>
            <person name="Wang X."/>
            <person name="Freeling M."/>
            <person name="Pires J.C."/>
            <person name="Paterson A.H."/>
            <person name="Chalhoub B."/>
            <person name="Wang B."/>
            <person name="Hayward A."/>
            <person name="Sharpe A.G."/>
            <person name="Park B.S."/>
            <person name="Weisshaar B."/>
            <person name="Liu B."/>
            <person name="Li B."/>
            <person name="Liu B."/>
            <person name="Tong C."/>
            <person name="Song C."/>
            <person name="Duran C."/>
            <person name="Peng C."/>
            <person name="Geng C."/>
            <person name="Koh C."/>
            <person name="Lin C."/>
            <person name="Edwards D."/>
            <person name="Mu D."/>
            <person name="Shen D."/>
            <person name="Soumpourou E."/>
            <person name="Li F."/>
            <person name="Fraser F."/>
            <person name="Conant G."/>
            <person name="Lassalle G."/>
            <person name="King G.J."/>
            <person name="Bonnema G."/>
            <person name="Tang H."/>
            <person name="Wang H."/>
            <person name="Belcram H."/>
            <person name="Zhou H."/>
            <person name="Hirakawa H."/>
            <person name="Abe H."/>
            <person name="Guo H."/>
            <person name="Wang H."/>
            <person name="Jin H."/>
            <person name="Parkin I.A."/>
            <person name="Batley J."/>
            <person name="Kim J.S."/>
            <person name="Just J."/>
            <person name="Li J."/>
            <person name="Xu J."/>
            <person name="Deng J."/>
            <person name="Kim J.A."/>
            <person name="Li J."/>
            <person name="Yu J."/>
            <person name="Meng J."/>
            <person name="Wang J."/>
            <person name="Min J."/>
            <person name="Poulain J."/>
            <person name="Wang J."/>
            <person name="Hatakeyama K."/>
            <person name="Wu K."/>
            <person name="Wang L."/>
            <person name="Fang L."/>
            <person name="Trick M."/>
            <person name="Links M.G."/>
            <person name="Zhao M."/>
            <person name="Jin M."/>
            <person name="Ramchiary N."/>
            <person name="Drou N."/>
            <person name="Berkman P.J."/>
            <person name="Cai Q."/>
            <person name="Huang Q."/>
            <person name="Li R."/>
            <person name="Tabata S."/>
            <person name="Cheng S."/>
            <person name="Zhang S."/>
            <person name="Zhang S."/>
            <person name="Huang S."/>
            <person name="Sato S."/>
            <person name="Sun S."/>
            <person name="Kwon S.J."/>
            <person name="Choi S.R."/>
            <person name="Lee T.H."/>
            <person name="Fan W."/>
            <person name="Zhao X."/>
            <person name="Tan X."/>
            <person name="Xu X."/>
            <person name="Wang Y."/>
            <person name="Qiu Y."/>
            <person name="Yin Y."/>
            <person name="Li Y."/>
            <person name="Du Y."/>
            <person name="Liao Y."/>
            <person name="Lim Y."/>
            <person name="Narusaka Y."/>
            <person name="Wang Y."/>
            <person name="Wang Z."/>
            <person name="Li Z."/>
            <person name="Wang Z."/>
            <person name="Xiong Z."/>
            <person name="Zhang Z."/>
        </authorList>
    </citation>
    <scope>NUCLEOTIDE SEQUENCE [LARGE SCALE GENOMIC DNA]</scope>
    <source>
        <strain>cv. Chiifu-401-42</strain>
    </source>
</reference>
<reference key="2">
    <citation type="journal article" date="2016" name="J. Exp. Bot.">
        <title>Ascorbic acid accumulates as a defense response to Turnip mosaic virus in resistant Brassica rapa cultivars.</title>
        <authorList>
            <person name="Fujiwara A."/>
            <person name="Togawa S."/>
            <person name="Hikawa T."/>
            <person name="Matsuura H."/>
            <person name="Masuta C."/>
            <person name="Inukai T."/>
        </authorList>
    </citation>
    <scope>FUNCTION</scope>
    <scope>REPRESSION BY TURNIP MOSAIC VIRUS</scope>
    <scope>INDUCTION BY JASMONIC ACID AND HYDROGEN PEROXIDE</scope>
    <source>
        <strain>cv. Aki-masari</strain>
        <strain>cv. Yukihime-kabu</strain>
    </source>
</reference>
<proteinExistence type="evidence at transcript level"/>
<sequence>MGMWWIVAVAILAHTASAAVREYAWEVEYKFGWPDCKEGMVMAVNGQFPGPTIHALAGDTIVVHLTNKLATEGLVIHWHGIRQLGSPWADGAAGVTQCAISPGETFTYNFTVDKPGTHFYHGHYGMQRSAGLYGSLIIDVAKGKKEPLRYDGEFNLLLSDWWHEDVLSQEIGLSSRPMRWIGEAQSILINGRGQFNCSLAAQFSSTSLPTCTFKEGDQCAPQRLHVEPNKTYRIRLASSTALASLNFAVQGHKLVVVEADGNYITPFTTDDIDIYSGETYSVLLTTDQDPSQNYYITAGVRGRKPNTPPALTVLNYVTAPSSQLPTSPPPETPRWNDFDRSKNFSKKIFAAMGSPSPPETFDERLILLNTQNLIEGFTKWAINNVSLAVPGTPYLGSVKYNLRTGFNRSSPPKDYPVDYDIMTPPRNRNAKQGNVSCVFPFNVTVDVILQNANGLNANASEIHPWHLHGHDFWVLGYGEGKFKPGVDEKTYNLKNPPLRNTVALYPYGWTALRFVTDNPGVWFFHCHIEPHLHMGMGVVFAEGLNRIGKVPDEALGCGLTKQFLMNRNNP</sequence>
<dbReference type="EC" id="1.10.3.3" evidence="2"/>
<dbReference type="EMBL" id="CM001635">
    <property type="status" value="NOT_ANNOTATED_CDS"/>
    <property type="molecule type" value="Genomic_DNA"/>
</dbReference>
<dbReference type="SMR" id="M4DUF2"/>
<dbReference type="FunCoup" id="M4DUF2">
    <property type="interactions" value="331"/>
</dbReference>
<dbReference type="STRING" id="51351.M4DUF2"/>
<dbReference type="GlyCosmos" id="M4DUF2">
    <property type="glycosylation" value="9 sites, No reported glycans"/>
</dbReference>
<dbReference type="eggNOG" id="KOG1263">
    <property type="taxonomic scope" value="Eukaryota"/>
</dbReference>
<dbReference type="HOGENOM" id="CLU_006504_8_3_1"/>
<dbReference type="InParanoid" id="M4DUF2"/>
<dbReference type="OMA" id="CHIIEHQ"/>
<dbReference type="UniPathway" id="UPA00263"/>
<dbReference type="GO" id="GO:0005576">
    <property type="term" value="C:extracellular region"/>
    <property type="evidence" value="ECO:0007669"/>
    <property type="project" value="UniProtKB-SubCell"/>
</dbReference>
<dbReference type="GO" id="GO:0009506">
    <property type="term" value="C:plasmodesma"/>
    <property type="evidence" value="ECO:0007669"/>
    <property type="project" value="TreeGrafter"/>
</dbReference>
<dbReference type="GO" id="GO:0005507">
    <property type="term" value="F:copper ion binding"/>
    <property type="evidence" value="ECO:0007669"/>
    <property type="project" value="InterPro"/>
</dbReference>
<dbReference type="GO" id="GO:0008447">
    <property type="term" value="F:L-ascorbate oxidase activity"/>
    <property type="evidence" value="ECO:0000250"/>
    <property type="project" value="UniProtKB"/>
</dbReference>
<dbReference type="GO" id="GO:0006952">
    <property type="term" value="P:defense response"/>
    <property type="evidence" value="ECO:0007669"/>
    <property type="project" value="UniProtKB-KW"/>
</dbReference>
<dbReference type="GO" id="GO:0019854">
    <property type="term" value="P:L-ascorbic acid catabolic process"/>
    <property type="evidence" value="ECO:0007669"/>
    <property type="project" value="UniProtKB-UniPathway"/>
</dbReference>
<dbReference type="GO" id="GO:0050687">
    <property type="term" value="P:negative regulation of defense response to virus"/>
    <property type="evidence" value="ECO:0000314"/>
    <property type="project" value="UniProtKB"/>
</dbReference>
<dbReference type="GO" id="GO:0042542">
    <property type="term" value="P:response to hydrogen peroxide"/>
    <property type="evidence" value="ECO:0000270"/>
    <property type="project" value="UniProtKB"/>
</dbReference>
<dbReference type="GO" id="GO:0009753">
    <property type="term" value="P:response to jasmonic acid"/>
    <property type="evidence" value="ECO:0000270"/>
    <property type="project" value="UniProtKB"/>
</dbReference>
<dbReference type="GO" id="GO:0009615">
    <property type="term" value="P:response to virus"/>
    <property type="evidence" value="ECO:0000270"/>
    <property type="project" value="UniProtKB"/>
</dbReference>
<dbReference type="CDD" id="cd13893">
    <property type="entry name" value="CuRO_3_AAO"/>
    <property type="match status" value="1"/>
</dbReference>
<dbReference type="FunFam" id="2.60.40.420:FF:000058">
    <property type="entry name" value="L-ascorbate oxidase"/>
    <property type="match status" value="1"/>
</dbReference>
<dbReference type="FunFam" id="2.60.40.420:FF:000060">
    <property type="entry name" value="L-ascorbate oxidase"/>
    <property type="match status" value="1"/>
</dbReference>
<dbReference type="Gene3D" id="2.60.40.420">
    <property type="entry name" value="Cupredoxins - blue copper proteins"/>
    <property type="match status" value="3"/>
</dbReference>
<dbReference type="InterPro" id="IPR011707">
    <property type="entry name" value="Cu-oxidase-like_N"/>
</dbReference>
<dbReference type="InterPro" id="IPR001117">
    <property type="entry name" value="Cu-oxidase_2nd"/>
</dbReference>
<dbReference type="InterPro" id="IPR011706">
    <property type="entry name" value="Cu-oxidase_C"/>
</dbReference>
<dbReference type="InterPro" id="IPR045087">
    <property type="entry name" value="Cu-oxidase_fam"/>
</dbReference>
<dbReference type="InterPro" id="IPR033138">
    <property type="entry name" value="Cu_oxidase_CS"/>
</dbReference>
<dbReference type="InterPro" id="IPR002355">
    <property type="entry name" value="Cu_oxidase_Cu_BS"/>
</dbReference>
<dbReference type="InterPro" id="IPR008972">
    <property type="entry name" value="Cupredoxin"/>
</dbReference>
<dbReference type="InterPro" id="IPR034267">
    <property type="entry name" value="CuRO_3_AAO"/>
</dbReference>
<dbReference type="InterPro" id="IPR017760">
    <property type="entry name" value="L-ascorbate_oxidase_pln"/>
</dbReference>
<dbReference type="NCBIfam" id="TIGR03388">
    <property type="entry name" value="ascorbase"/>
    <property type="match status" value="1"/>
</dbReference>
<dbReference type="PANTHER" id="PTHR11709:SF394">
    <property type="entry name" value="FI03373P-RELATED"/>
    <property type="match status" value="1"/>
</dbReference>
<dbReference type="PANTHER" id="PTHR11709">
    <property type="entry name" value="MULTI-COPPER OXIDASE"/>
    <property type="match status" value="1"/>
</dbReference>
<dbReference type="Pfam" id="PF00394">
    <property type="entry name" value="Cu-oxidase"/>
    <property type="match status" value="1"/>
</dbReference>
<dbReference type="Pfam" id="PF07731">
    <property type="entry name" value="Cu-oxidase_2"/>
    <property type="match status" value="1"/>
</dbReference>
<dbReference type="Pfam" id="PF07732">
    <property type="entry name" value="Cu-oxidase_3"/>
    <property type="match status" value="1"/>
</dbReference>
<dbReference type="SUPFAM" id="SSF49503">
    <property type="entry name" value="Cupredoxins"/>
    <property type="match status" value="3"/>
</dbReference>
<dbReference type="PROSITE" id="PS00079">
    <property type="entry name" value="MULTICOPPER_OXIDASE1"/>
    <property type="match status" value="1"/>
</dbReference>
<dbReference type="PROSITE" id="PS00080">
    <property type="entry name" value="MULTICOPPER_OXIDASE2"/>
    <property type="match status" value="1"/>
</dbReference>
<organism>
    <name type="scientific">Brassica rapa subsp. pekinensis</name>
    <name type="common">Chinese cabbage</name>
    <name type="synonym">Brassica pekinensis</name>
    <dbReference type="NCBI Taxonomy" id="51351"/>
    <lineage>
        <taxon>Eukaryota</taxon>
        <taxon>Viridiplantae</taxon>
        <taxon>Streptophyta</taxon>
        <taxon>Embryophyta</taxon>
        <taxon>Tracheophyta</taxon>
        <taxon>Spermatophyta</taxon>
        <taxon>Magnoliopsida</taxon>
        <taxon>eudicotyledons</taxon>
        <taxon>Gunneridae</taxon>
        <taxon>Pentapetalae</taxon>
        <taxon>rosids</taxon>
        <taxon>malvids</taxon>
        <taxon>Brassicales</taxon>
        <taxon>Brassicaceae</taxon>
        <taxon>Brassiceae</taxon>
        <taxon>Brassica</taxon>
    </lineage>
</organism>
<gene>
    <name evidence="6" type="primary">AO</name>
</gene>
<evidence type="ECO:0000250" key="1">
    <source>
        <dbReference type="UniProtKB" id="P37064"/>
    </source>
</evidence>
<evidence type="ECO:0000250" key="2">
    <source>
        <dbReference type="UniProtKB" id="Q8LPL3"/>
    </source>
</evidence>
<evidence type="ECO:0000255" key="3"/>
<evidence type="ECO:0000255" key="4">
    <source>
        <dbReference type="PROSITE-ProRule" id="PRU00498"/>
    </source>
</evidence>
<evidence type="ECO:0000269" key="5">
    <source>
    </source>
</evidence>
<evidence type="ECO:0000303" key="6">
    <source>
    </source>
</evidence>
<evidence type="ECO:0000305" key="7"/>